<organism>
    <name type="scientific">Alkalihalophilus pseudofirmus (strain ATCC BAA-2126 / JCM 17055 / OF4)</name>
    <name type="common">Bacillus pseudofirmus</name>
    <dbReference type="NCBI Taxonomy" id="398511"/>
    <lineage>
        <taxon>Bacteria</taxon>
        <taxon>Bacillati</taxon>
        <taxon>Bacillota</taxon>
        <taxon>Bacilli</taxon>
        <taxon>Bacillales</taxon>
        <taxon>Bacillaceae</taxon>
        <taxon>Alkalihalophilus</taxon>
    </lineage>
</organism>
<proteinExistence type="inferred from homology"/>
<sequence>MLAYAMRRLLLLIPVLIGMTIVTFSIIHLIPGNPAQTILGEQASPQAIADLEERLGLNEPYWVQYGLYMKDLATGDLGTSLRTNKPIMEEIWPYLAATIELTIFAMIFAIIIGVNAGIVSAWKQNSWFDYLSMFIALVGVSMPIFWLALMEQWIFAQELGWLPAFGRDNPRDPIISTTGLYVFDTIISGQFDKTWESIKHLILPGIALGTIPMAIIARMTRSSMLEVLRSDYIRTVNAKGSGQGVVIYKHALKNALIPVLTVVGLQTGNLLGGAILTETIFSWPGIGRYIFEAINYRDYPVIQSGILVVATIFVLINLFVDLLYSYIDPRIKY</sequence>
<evidence type="ECO:0000250" key="1">
    <source>
        <dbReference type="UniProtKB" id="P26903"/>
    </source>
</evidence>
<evidence type="ECO:0000255" key="2">
    <source>
        <dbReference type="PROSITE-ProRule" id="PRU00441"/>
    </source>
</evidence>
<evidence type="ECO:0000305" key="3"/>
<reference key="1">
    <citation type="journal article" date="1997" name="Extremophiles">
        <title>Diverse genes of alkaliphilic Bacillus firmus OF4 that complement K+-uptake-deficient Escherichia coli include an ftsH homologue.</title>
        <authorList>
            <person name="Ito M."/>
            <person name="Cooperberg B."/>
            <person name="Krulwich T.A."/>
        </authorList>
    </citation>
    <scope>NUCLEOTIDE SEQUENCE [GENOMIC DNA]</scope>
</reference>
<reference key="2">
    <citation type="journal article" date="2011" name="Environ. Microbiol.">
        <title>Genome of alkaliphilic Bacillus pseudofirmus OF4 reveals adaptations that support the ability to grow in an external pH range from 7.5 to 11.4.</title>
        <authorList>
            <person name="Janto B."/>
            <person name="Ahmed A."/>
            <person name="Ito M."/>
            <person name="Liu J."/>
            <person name="Hicks D.B."/>
            <person name="Pagni S."/>
            <person name="Fackelmayer O.J."/>
            <person name="Smith T.A."/>
            <person name="Earl J."/>
            <person name="Elbourne L.D."/>
            <person name="Hassan K."/>
            <person name="Paulsen I.T."/>
            <person name="Kolsto A.B."/>
            <person name="Tourasse N.J."/>
            <person name="Ehrlich G.D."/>
            <person name="Boissy R."/>
            <person name="Ivey D.M."/>
            <person name="Li G."/>
            <person name="Xue Y."/>
            <person name="Ma Y."/>
            <person name="Hu F.Z."/>
            <person name="Krulwich T.A."/>
        </authorList>
    </citation>
    <scope>NUCLEOTIDE SEQUENCE [LARGE SCALE GENOMIC DNA]</scope>
    <source>
        <strain>ATCC BAA-2126 / JCM 17055 / OF4</strain>
    </source>
</reference>
<gene>
    <name type="primary">dppB</name>
    <name type="ordered locus">BpOF4_05750</name>
</gene>
<protein>
    <recommendedName>
        <fullName>Dipeptide transport system permease protein DppB</fullName>
    </recommendedName>
</protein>
<keyword id="KW-1003">Cell membrane</keyword>
<keyword id="KW-0472">Membrane</keyword>
<keyword id="KW-0571">Peptide transport</keyword>
<keyword id="KW-0653">Protein transport</keyword>
<keyword id="KW-1185">Reference proteome</keyword>
<keyword id="KW-0812">Transmembrane</keyword>
<keyword id="KW-1133">Transmembrane helix</keyword>
<keyword id="KW-0813">Transport</keyword>
<comment type="function">
    <text evidence="1">Probably part of the ABC transporter Dpp involved in dipeptide transport. Responsible for the translocation of the substrate across the membrane.</text>
</comment>
<comment type="subcellular location">
    <subcellularLocation>
        <location evidence="3">Cell membrane</location>
        <topology evidence="2">Multi-pass membrane protein</topology>
    </subcellularLocation>
</comment>
<comment type="similarity">
    <text evidence="3">Belongs to the binding-protein-dependent transport system permease family. OppBC subfamily.</text>
</comment>
<feature type="chain" id="PRO_0000060001" description="Dipeptide transport system permease protein DppB">
    <location>
        <begin position="1"/>
        <end position="333"/>
    </location>
</feature>
<feature type="transmembrane region" description="Helical" evidence="2">
    <location>
        <begin position="10"/>
        <end position="30"/>
    </location>
</feature>
<feature type="transmembrane region" description="Helical" evidence="2">
    <location>
        <begin position="99"/>
        <end position="119"/>
    </location>
</feature>
<feature type="transmembrane region" description="Helical" evidence="2">
    <location>
        <begin position="130"/>
        <end position="150"/>
    </location>
</feature>
<feature type="transmembrane region" description="Helical" evidence="2">
    <location>
        <begin position="197"/>
        <end position="217"/>
    </location>
</feature>
<feature type="transmembrane region" description="Helical" evidence="2">
    <location>
        <begin position="256"/>
        <end position="276"/>
    </location>
</feature>
<feature type="transmembrane region" description="Helical" evidence="2">
    <location>
        <begin position="300"/>
        <end position="320"/>
    </location>
</feature>
<feature type="domain" description="ABC transmembrane type-1" evidence="2">
    <location>
        <begin position="95"/>
        <end position="324"/>
    </location>
</feature>
<accession>P94311</accession>
<accession>D3FZH0</accession>
<name>DPPB_ALKPO</name>
<dbReference type="EMBL" id="U64514">
    <property type="protein sequence ID" value="AAB41689.1"/>
    <property type="molecule type" value="Genomic_DNA"/>
</dbReference>
<dbReference type="EMBL" id="CP001878">
    <property type="protein sequence ID" value="ADC49212.1"/>
    <property type="molecule type" value="Genomic_DNA"/>
</dbReference>
<dbReference type="PIR" id="T44636">
    <property type="entry name" value="T44636"/>
</dbReference>
<dbReference type="RefSeq" id="WP_012960485.1">
    <property type="nucleotide sequence ID" value="NC_013791.2"/>
</dbReference>
<dbReference type="SMR" id="P94311"/>
<dbReference type="STRING" id="398511.BpOF4_05750"/>
<dbReference type="KEGG" id="bpf:BpOF4_05750"/>
<dbReference type="eggNOG" id="COG0601">
    <property type="taxonomic scope" value="Bacteria"/>
</dbReference>
<dbReference type="HOGENOM" id="CLU_036879_0_0_9"/>
<dbReference type="Proteomes" id="UP000001544">
    <property type="component" value="Chromosome"/>
</dbReference>
<dbReference type="GO" id="GO:0005886">
    <property type="term" value="C:plasma membrane"/>
    <property type="evidence" value="ECO:0007669"/>
    <property type="project" value="UniProtKB-SubCell"/>
</dbReference>
<dbReference type="GO" id="GO:0015833">
    <property type="term" value="P:peptide transport"/>
    <property type="evidence" value="ECO:0007669"/>
    <property type="project" value="UniProtKB-KW"/>
</dbReference>
<dbReference type="GO" id="GO:0015031">
    <property type="term" value="P:protein transport"/>
    <property type="evidence" value="ECO:0007669"/>
    <property type="project" value="UniProtKB-KW"/>
</dbReference>
<dbReference type="GO" id="GO:0055085">
    <property type="term" value="P:transmembrane transport"/>
    <property type="evidence" value="ECO:0007669"/>
    <property type="project" value="InterPro"/>
</dbReference>
<dbReference type="CDD" id="cd06261">
    <property type="entry name" value="TM_PBP2"/>
    <property type="match status" value="1"/>
</dbReference>
<dbReference type="Gene3D" id="1.10.3720.10">
    <property type="entry name" value="MetI-like"/>
    <property type="match status" value="1"/>
</dbReference>
<dbReference type="InterPro" id="IPR045621">
    <property type="entry name" value="BPD_transp_1_N"/>
</dbReference>
<dbReference type="InterPro" id="IPR000515">
    <property type="entry name" value="MetI-like"/>
</dbReference>
<dbReference type="InterPro" id="IPR035906">
    <property type="entry name" value="MetI-like_sf"/>
</dbReference>
<dbReference type="PANTHER" id="PTHR43163">
    <property type="entry name" value="DIPEPTIDE TRANSPORT SYSTEM PERMEASE PROTEIN DPPB-RELATED"/>
    <property type="match status" value="1"/>
</dbReference>
<dbReference type="PANTHER" id="PTHR43163:SF6">
    <property type="entry name" value="DIPEPTIDE TRANSPORT SYSTEM PERMEASE PROTEIN DPPB-RELATED"/>
    <property type="match status" value="1"/>
</dbReference>
<dbReference type="Pfam" id="PF00528">
    <property type="entry name" value="BPD_transp_1"/>
    <property type="match status" value="1"/>
</dbReference>
<dbReference type="Pfam" id="PF19300">
    <property type="entry name" value="BPD_transp_1_N"/>
    <property type="match status" value="1"/>
</dbReference>
<dbReference type="SUPFAM" id="SSF161098">
    <property type="entry name" value="MetI-like"/>
    <property type="match status" value="1"/>
</dbReference>
<dbReference type="PROSITE" id="PS50928">
    <property type="entry name" value="ABC_TM1"/>
    <property type="match status" value="1"/>
</dbReference>